<gene>
    <name type="ordered locus">ELI_10965</name>
</gene>
<protein>
    <recommendedName>
        <fullName evidence="1">UPF0262 protein ELI_10965</fullName>
    </recommendedName>
</protein>
<comment type="similarity">
    <text evidence="1">Belongs to the UPF0262 family.</text>
</comment>
<proteinExistence type="inferred from homology"/>
<sequence length="160" mass="18640">MAQHRISHISLDENTILWRNADIEQERRVAIYDLIEENTFKPVRSNAAGHTGPYRLHLSVQDGRLAMDIRDRDDEELEMLILGLARFRRPIREYFAICDSYYQAIRKATPSEIETIDMARRGVHNHAAELLIERLEGKVETDFPTARRLFTLICVLHIKG</sequence>
<accession>Q2N7Q6</accession>
<evidence type="ECO:0000255" key="1">
    <source>
        <dbReference type="HAMAP-Rule" id="MF_00678"/>
    </source>
</evidence>
<feature type="chain" id="PRO_0000314193" description="UPF0262 protein ELI_10965">
    <location>
        <begin position="1"/>
        <end position="160"/>
    </location>
</feature>
<keyword id="KW-1185">Reference proteome</keyword>
<reference key="1">
    <citation type="journal article" date="2009" name="J. Bacteriol.">
        <title>Complete genome sequence of Erythrobacter litoralis HTCC2594.</title>
        <authorList>
            <person name="Oh H.M."/>
            <person name="Giovannoni S.J."/>
            <person name="Ferriera S."/>
            <person name="Johnson J."/>
            <person name="Cho J.C."/>
        </authorList>
    </citation>
    <scope>NUCLEOTIDE SEQUENCE [LARGE SCALE GENOMIC DNA]</scope>
    <source>
        <strain>HTCC2594</strain>
    </source>
</reference>
<name>YA965_ERYLH</name>
<organism>
    <name type="scientific">Erythrobacter litoralis (strain HTCC2594)</name>
    <dbReference type="NCBI Taxonomy" id="314225"/>
    <lineage>
        <taxon>Bacteria</taxon>
        <taxon>Pseudomonadati</taxon>
        <taxon>Pseudomonadota</taxon>
        <taxon>Alphaproteobacteria</taxon>
        <taxon>Sphingomonadales</taxon>
        <taxon>Erythrobacteraceae</taxon>
        <taxon>Erythrobacter/Porphyrobacter group</taxon>
        <taxon>Erythrobacter</taxon>
    </lineage>
</organism>
<dbReference type="EMBL" id="CP000157">
    <property type="protein sequence ID" value="ABC64285.1"/>
    <property type="molecule type" value="Genomic_DNA"/>
</dbReference>
<dbReference type="RefSeq" id="WP_011415108.1">
    <property type="nucleotide sequence ID" value="NC_007722.1"/>
</dbReference>
<dbReference type="STRING" id="314225.ELI_10965"/>
<dbReference type="KEGG" id="eli:ELI_10965"/>
<dbReference type="eggNOG" id="COG5328">
    <property type="taxonomic scope" value="Bacteria"/>
</dbReference>
<dbReference type="HOGENOM" id="CLU_112904_0_0_5"/>
<dbReference type="OrthoDB" id="9798434at2"/>
<dbReference type="Proteomes" id="UP000008808">
    <property type="component" value="Chromosome"/>
</dbReference>
<dbReference type="HAMAP" id="MF_00678">
    <property type="entry name" value="UPF0262"/>
    <property type="match status" value="1"/>
</dbReference>
<dbReference type="InterPro" id="IPR008321">
    <property type="entry name" value="UCP032146"/>
</dbReference>
<dbReference type="NCBIfam" id="NF002769">
    <property type="entry name" value="PRK02853.1"/>
    <property type="match status" value="1"/>
</dbReference>
<dbReference type="Pfam" id="PF06793">
    <property type="entry name" value="UPF0262"/>
    <property type="match status" value="1"/>
</dbReference>
<dbReference type="PIRSF" id="PIRSF032146">
    <property type="entry name" value="UCP032146"/>
    <property type="match status" value="1"/>
</dbReference>